<protein>
    <recommendedName>
        <fullName evidence="1">Protein ApaG</fullName>
    </recommendedName>
</protein>
<proteinExistence type="inferred from homology"/>
<evidence type="ECO:0000255" key="1">
    <source>
        <dbReference type="HAMAP-Rule" id="MF_00791"/>
    </source>
</evidence>
<reference key="1">
    <citation type="journal article" date="2006" name="Nat. Biotechnol.">
        <title>Complete genome of the mutualistic, N2-fixing grass endophyte Azoarcus sp. strain BH72.</title>
        <authorList>
            <person name="Krause A."/>
            <person name="Ramakumar A."/>
            <person name="Bartels D."/>
            <person name="Battistoni F."/>
            <person name="Bekel T."/>
            <person name="Boch J."/>
            <person name="Boehm M."/>
            <person name="Friedrich F."/>
            <person name="Hurek T."/>
            <person name="Krause L."/>
            <person name="Linke B."/>
            <person name="McHardy A.C."/>
            <person name="Sarkar A."/>
            <person name="Schneiker S."/>
            <person name="Syed A.A."/>
            <person name="Thauer R."/>
            <person name="Vorhoelter F.-J."/>
            <person name="Weidner S."/>
            <person name="Puehler A."/>
            <person name="Reinhold-Hurek B."/>
            <person name="Kaiser O."/>
            <person name="Goesmann A."/>
        </authorList>
    </citation>
    <scope>NUCLEOTIDE SEQUENCE [LARGE SCALE GENOMIC DNA]</scope>
    <source>
        <strain>BH72</strain>
    </source>
</reference>
<sequence length="127" mass="13978">MSKSETYRIEVEAVAEYVEAQSNPEDDHYVFAYNITIRNTGTVAARLVSRHWVITDGTGHVQEVHGQGVVGEQPLLAPGESFRYTSGSVLETAVGTMHGSYQMEASDGHRFDAPIPAFMLAMPRVLH</sequence>
<feature type="chain" id="PRO_1000083605" description="Protein ApaG">
    <location>
        <begin position="1"/>
        <end position="127"/>
    </location>
</feature>
<feature type="domain" description="ApaG" evidence="1">
    <location>
        <begin position="3"/>
        <end position="127"/>
    </location>
</feature>
<dbReference type="EMBL" id="AM406670">
    <property type="protein sequence ID" value="CAL93517.1"/>
    <property type="molecule type" value="Genomic_DNA"/>
</dbReference>
<dbReference type="RefSeq" id="WP_011764634.1">
    <property type="nucleotide sequence ID" value="NC_008702.1"/>
</dbReference>
<dbReference type="SMR" id="A1K3W2"/>
<dbReference type="STRING" id="62928.azo0900"/>
<dbReference type="KEGG" id="aoa:dqs_0971"/>
<dbReference type="KEGG" id="azo:azo0900"/>
<dbReference type="eggNOG" id="COG2967">
    <property type="taxonomic scope" value="Bacteria"/>
</dbReference>
<dbReference type="HOGENOM" id="CLU_128074_0_0_4"/>
<dbReference type="OrthoDB" id="9795226at2"/>
<dbReference type="Proteomes" id="UP000002588">
    <property type="component" value="Chromosome"/>
</dbReference>
<dbReference type="GO" id="GO:0070987">
    <property type="term" value="P:error-free translesion synthesis"/>
    <property type="evidence" value="ECO:0007669"/>
    <property type="project" value="TreeGrafter"/>
</dbReference>
<dbReference type="Gene3D" id="2.60.40.1470">
    <property type="entry name" value="ApaG domain"/>
    <property type="match status" value="1"/>
</dbReference>
<dbReference type="HAMAP" id="MF_00791">
    <property type="entry name" value="ApaG"/>
    <property type="match status" value="1"/>
</dbReference>
<dbReference type="InterPro" id="IPR007474">
    <property type="entry name" value="ApaG_domain"/>
</dbReference>
<dbReference type="InterPro" id="IPR036767">
    <property type="entry name" value="ApaG_sf"/>
</dbReference>
<dbReference type="InterPro" id="IPR023065">
    <property type="entry name" value="Uncharacterised_ApaG"/>
</dbReference>
<dbReference type="NCBIfam" id="NF003967">
    <property type="entry name" value="PRK05461.1"/>
    <property type="match status" value="1"/>
</dbReference>
<dbReference type="PANTHER" id="PTHR14289">
    <property type="entry name" value="F-BOX ONLY PROTEIN 3"/>
    <property type="match status" value="1"/>
</dbReference>
<dbReference type="PANTHER" id="PTHR14289:SF16">
    <property type="entry name" value="POLYMERASE DELTA-INTERACTING PROTEIN 2"/>
    <property type="match status" value="1"/>
</dbReference>
<dbReference type="Pfam" id="PF04379">
    <property type="entry name" value="DUF525"/>
    <property type="match status" value="1"/>
</dbReference>
<dbReference type="SUPFAM" id="SSF110069">
    <property type="entry name" value="ApaG-like"/>
    <property type="match status" value="1"/>
</dbReference>
<dbReference type="PROSITE" id="PS51087">
    <property type="entry name" value="APAG"/>
    <property type="match status" value="1"/>
</dbReference>
<keyword id="KW-1185">Reference proteome</keyword>
<organism>
    <name type="scientific">Azoarcus sp. (strain BH72)</name>
    <dbReference type="NCBI Taxonomy" id="418699"/>
    <lineage>
        <taxon>Bacteria</taxon>
        <taxon>Pseudomonadati</taxon>
        <taxon>Pseudomonadota</taxon>
        <taxon>Betaproteobacteria</taxon>
        <taxon>Rhodocyclales</taxon>
        <taxon>Zoogloeaceae</taxon>
        <taxon>Azoarcus</taxon>
    </lineage>
</organism>
<name>APAG_AZOSB</name>
<gene>
    <name evidence="1" type="primary">apaG</name>
    <name type="ordered locus">azo0900</name>
</gene>
<accession>A1K3W2</accession>